<evidence type="ECO:0000250" key="1"/>
<evidence type="ECO:0000305" key="2"/>
<gene>
    <name type="primary">truA</name>
    <name type="synonym">hisT</name>
    <name type="ordered locus">MG182</name>
</gene>
<proteinExistence type="inferred from homology"/>
<protein>
    <recommendedName>
        <fullName>tRNA pseudouridine synthase A</fullName>
        <ecNumber>5.4.99.12</ecNumber>
    </recommendedName>
    <alternativeName>
        <fullName>tRNA pseudouridine(38-40) synthase</fullName>
    </alternativeName>
    <alternativeName>
        <fullName>tRNA pseudouridylate synthase I</fullName>
    </alternativeName>
    <alternativeName>
        <fullName>tRNA-uridine isomerase I</fullName>
    </alternativeName>
</protein>
<comment type="function">
    <text evidence="1">Formation of pseudouridine at positions 38, 39 and 40 in the anticodon stem and loop of transfer RNAs.</text>
</comment>
<comment type="catalytic activity">
    <reaction>
        <text>uridine(38/39/40) in tRNA = pseudouridine(38/39/40) in tRNA</text>
        <dbReference type="Rhea" id="RHEA:22376"/>
        <dbReference type="Rhea" id="RHEA-COMP:10085"/>
        <dbReference type="Rhea" id="RHEA-COMP:10087"/>
        <dbReference type="ChEBI" id="CHEBI:65314"/>
        <dbReference type="ChEBI" id="CHEBI:65315"/>
        <dbReference type="EC" id="5.4.99.12"/>
    </reaction>
</comment>
<comment type="subunit">
    <text evidence="1">Homodimer.</text>
</comment>
<comment type="similarity">
    <text evidence="2">Belongs to the tRNA pseudouridine synthase TruA family.</text>
</comment>
<dbReference type="EC" id="5.4.99.12"/>
<dbReference type="EMBL" id="L43967">
    <property type="protein sequence ID" value="AAC71401.1"/>
    <property type="molecule type" value="Genomic_DNA"/>
</dbReference>
<dbReference type="EMBL" id="U02176">
    <property type="protein sequence ID" value="AAD12460.1"/>
    <property type="molecule type" value="Genomic_DNA"/>
</dbReference>
<dbReference type="EMBL" id="U02100">
    <property type="protein sequence ID" value="AAD12372.1"/>
    <property type="molecule type" value="Genomic_DNA"/>
</dbReference>
<dbReference type="PIR" id="B64220">
    <property type="entry name" value="B64220"/>
</dbReference>
<dbReference type="RefSeq" id="WP_009885867.1">
    <property type="nucleotide sequence ID" value="NC_000908.2"/>
</dbReference>
<dbReference type="SMR" id="P47428"/>
<dbReference type="FunCoup" id="P47428">
    <property type="interactions" value="199"/>
</dbReference>
<dbReference type="STRING" id="243273.MG_182"/>
<dbReference type="GeneID" id="88282314"/>
<dbReference type="KEGG" id="mge:MG_182"/>
<dbReference type="eggNOG" id="COG0101">
    <property type="taxonomic scope" value="Bacteria"/>
</dbReference>
<dbReference type="HOGENOM" id="CLU_014673_0_1_14"/>
<dbReference type="InParanoid" id="P47428"/>
<dbReference type="OrthoDB" id="9811823at2"/>
<dbReference type="BioCyc" id="MGEN243273:G1GJ2-206-MONOMER"/>
<dbReference type="Proteomes" id="UP000000807">
    <property type="component" value="Chromosome"/>
</dbReference>
<dbReference type="GO" id="GO:0009982">
    <property type="term" value="F:pseudouridine synthase activity"/>
    <property type="evidence" value="ECO:0000318"/>
    <property type="project" value="GO_Central"/>
</dbReference>
<dbReference type="GO" id="GO:0003723">
    <property type="term" value="F:RNA binding"/>
    <property type="evidence" value="ECO:0007669"/>
    <property type="project" value="InterPro"/>
</dbReference>
<dbReference type="GO" id="GO:0160147">
    <property type="term" value="F:tRNA pseudouridine(38-40) synthase activity"/>
    <property type="evidence" value="ECO:0007669"/>
    <property type="project" value="UniProtKB-EC"/>
</dbReference>
<dbReference type="GO" id="GO:0031119">
    <property type="term" value="P:tRNA pseudouridine synthesis"/>
    <property type="evidence" value="ECO:0000318"/>
    <property type="project" value="GO_Central"/>
</dbReference>
<dbReference type="CDD" id="cd02570">
    <property type="entry name" value="PseudoU_synth_EcTruA"/>
    <property type="match status" value="1"/>
</dbReference>
<dbReference type="Gene3D" id="3.30.70.660">
    <property type="entry name" value="Pseudouridine synthase I, catalytic domain, C-terminal subdomain"/>
    <property type="match status" value="1"/>
</dbReference>
<dbReference type="Gene3D" id="3.30.70.580">
    <property type="entry name" value="Pseudouridine synthase I, catalytic domain, N-terminal subdomain"/>
    <property type="match status" value="1"/>
</dbReference>
<dbReference type="HAMAP" id="MF_00171">
    <property type="entry name" value="TruA"/>
    <property type="match status" value="1"/>
</dbReference>
<dbReference type="InterPro" id="IPR020103">
    <property type="entry name" value="PsdUridine_synth_cat_dom_sf"/>
</dbReference>
<dbReference type="InterPro" id="IPR001406">
    <property type="entry name" value="PsdUridine_synth_TruA"/>
</dbReference>
<dbReference type="InterPro" id="IPR020097">
    <property type="entry name" value="PsdUridine_synth_TruA_a/b_dom"/>
</dbReference>
<dbReference type="InterPro" id="IPR020095">
    <property type="entry name" value="PsdUridine_synth_TruA_C"/>
</dbReference>
<dbReference type="InterPro" id="IPR020094">
    <property type="entry name" value="TruA/RsuA/RluB/E/F_N"/>
</dbReference>
<dbReference type="NCBIfam" id="TIGR00071">
    <property type="entry name" value="hisT_truA"/>
    <property type="match status" value="1"/>
</dbReference>
<dbReference type="PANTHER" id="PTHR11142">
    <property type="entry name" value="PSEUDOURIDYLATE SYNTHASE"/>
    <property type="match status" value="1"/>
</dbReference>
<dbReference type="PANTHER" id="PTHR11142:SF0">
    <property type="entry name" value="TRNA PSEUDOURIDINE SYNTHASE-LIKE 1"/>
    <property type="match status" value="1"/>
</dbReference>
<dbReference type="Pfam" id="PF01416">
    <property type="entry name" value="PseudoU_synth_1"/>
    <property type="match status" value="2"/>
</dbReference>
<dbReference type="PIRSF" id="PIRSF001430">
    <property type="entry name" value="tRNA_psdUrid_synth"/>
    <property type="match status" value="1"/>
</dbReference>
<dbReference type="SUPFAM" id="SSF55120">
    <property type="entry name" value="Pseudouridine synthase"/>
    <property type="match status" value="1"/>
</dbReference>
<accession>P47428</accession>
<accession>Q49300</accession>
<keyword id="KW-0413">Isomerase</keyword>
<keyword id="KW-1185">Reference proteome</keyword>
<keyword id="KW-0819">tRNA processing</keyword>
<organism>
    <name type="scientific">Mycoplasma genitalium (strain ATCC 33530 / DSM 19775 / NCTC 10195 / G37)</name>
    <name type="common">Mycoplasmoides genitalium</name>
    <dbReference type="NCBI Taxonomy" id="243273"/>
    <lineage>
        <taxon>Bacteria</taxon>
        <taxon>Bacillati</taxon>
        <taxon>Mycoplasmatota</taxon>
        <taxon>Mycoplasmoidales</taxon>
        <taxon>Mycoplasmoidaceae</taxon>
        <taxon>Mycoplasmoides</taxon>
    </lineage>
</organism>
<feature type="chain" id="PRO_0000057409" description="tRNA pseudouridine synthase A">
    <location>
        <begin position="1"/>
        <end position="244"/>
    </location>
</feature>
<feature type="active site" description="Nucleophile" evidence="1">
    <location>
        <position position="52"/>
    </location>
</feature>
<feature type="binding site" evidence="1">
    <location>
        <position position="110"/>
    </location>
    <ligand>
        <name>substrate</name>
    </ligand>
</feature>
<feature type="sequence conflict" description="In Ref. 2; AAD12460." evidence="2" ref="2">
    <original>S</original>
    <variation>I</variation>
    <location>
        <position position="13"/>
    </location>
</feature>
<sequence length="244" mass="27597">MARYLGIVSYDGSYFKGWAIQPNLATIQGLLEQSFSLIIGRKIKVIGSGRTDKGVHAINQTFHVDINGEINLNLLIRKINQLIKPHCIVKTLVLVNDSFHARFQVKTKVYEYLINCGNLNPLQFNYVWQLNQQLDLEKLKADATLFLGKKNFLSFSSSIHTDSIRTISKITIQKETNQLVRLTFFGSGFLRSQVRMIVACLVNLNTNKMALETVAKLFEHPKKGSCVVKAPSCGLYLKTVVYEK</sequence>
<reference key="1">
    <citation type="journal article" date="1995" name="Science">
        <title>The minimal gene complement of Mycoplasma genitalium.</title>
        <authorList>
            <person name="Fraser C.M."/>
            <person name="Gocayne J.D."/>
            <person name="White O."/>
            <person name="Adams M.D."/>
            <person name="Clayton R.A."/>
            <person name="Fleischmann R.D."/>
            <person name="Bult C.J."/>
            <person name="Kerlavage A.R."/>
            <person name="Sutton G.G."/>
            <person name="Kelley J.M."/>
            <person name="Fritchman J.L."/>
            <person name="Weidman J.F."/>
            <person name="Small K.V."/>
            <person name="Sandusky M."/>
            <person name="Fuhrmann J.L."/>
            <person name="Nguyen D.T."/>
            <person name="Utterback T.R."/>
            <person name="Saudek D.M."/>
            <person name="Phillips C.A."/>
            <person name="Merrick J.M."/>
            <person name="Tomb J.-F."/>
            <person name="Dougherty B.A."/>
            <person name="Bott K.F."/>
            <person name="Hu P.-C."/>
            <person name="Lucier T.S."/>
            <person name="Peterson S.N."/>
            <person name="Smith H.O."/>
            <person name="Hutchison C.A. III"/>
            <person name="Venter J.C."/>
        </authorList>
    </citation>
    <scope>NUCLEOTIDE SEQUENCE [LARGE SCALE GENOMIC DNA]</scope>
    <source>
        <strain>ATCC 33530 / DSM 19775 / NCTC 10195 / G37</strain>
    </source>
</reference>
<reference key="2">
    <citation type="journal article" date="1993" name="J. Bacteriol.">
        <title>A survey of the Mycoplasma genitalium genome by using random sequencing.</title>
        <authorList>
            <person name="Peterson S.N."/>
            <person name="Hu P.-C."/>
            <person name="Bott K.F."/>
            <person name="Hutchison C.A. III"/>
        </authorList>
    </citation>
    <scope>NUCLEOTIDE SEQUENCE [GENOMIC DNA] OF 1-102 AND 129-244</scope>
    <source>
        <strain>ATCC 33530 / DSM 19775 / NCTC 10195 / G37</strain>
    </source>
</reference>
<name>TRUA_MYCGE</name>